<proteinExistence type="evidence at protein level"/>
<dbReference type="EMBL" id="CH474078">
    <property type="protein sequence ID" value="EDL83846.1"/>
    <property type="status" value="ALT_SEQ"/>
    <property type="molecule type" value="Genomic_DNA"/>
</dbReference>
<dbReference type="RefSeq" id="NP_001129309.1">
    <property type="nucleotide sequence ID" value="NM_001135837.1"/>
</dbReference>
<dbReference type="SMR" id="P86182"/>
<dbReference type="FunCoup" id="P86182">
    <property type="interactions" value="2264"/>
</dbReference>
<dbReference type="IntAct" id="P86182">
    <property type="interactions" value="2"/>
</dbReference>
<dbReference type="STRING" id="10116.ENSRNOP00000015547"/>
<dbReference type="iPTMnet" id="P86182"/>
<dbReference type="PhosphoSitePlus" id="P86182"/>
<dbReference type="jPOST" id="P86182"/>
<dbReference type="PaxDb" id="10116-ENSRNOP00000015547"/>
<dbReference type="Ensembl" id="ENSRNOT00000015546.5">
    <property type="protein sequence ID" value="ENSRNOP00000015547.4"/>
    <property type="gene ID" value="ENSRNOG00000010846.6"/>
</dbReference>
<dbReference type="GeneID" id="317381"/>
<dbReference type="KEGG" id="rno:317381"/>
<dbReference type="UCSC" id="RGD:1560910">
    <property type="organism name" value="rat"/>
</dbReference>
<dbReference type="AGR" id="RGD:1560910"/>
<dbReference type="CTD" id="28952"/>
<dbReference type="RGD" id="1560910">
    <property type="gene designation" value="Ccdc22"/>
</dbReference>
<dbReference type="eggNOG" id="KOG1937">
    <property type="taxonomic scope" value="Eukaryota"/>
</dbReference>
<dbReference type="GeneTree" id="ENSGT00390000003809"/>
<dbReference type="HOGENOM" id="CLU_024231_1_0_1"/>
<dbReference type="InParanoid" id="P86182"/>
<dbReference type="OMA" id="KFEQHIQ"/>
<dbReference type="OrthoDB" id="10266736at2759"/>
<dbReference type="PhylomeDB" id="P86182"/>
<dbReference type="TreeFam" id="TF325575"/>
<dbReference type="Reactome" id="R-RNO-8951664">
    <property type="pathway name" value="Neddylation"/>
</dbReference>
<dbReference type="PRO" id="PR:P86182"/>
<dbReference type="Proteomes" id="UP000002494">
    <property type="component" value="Chromosome X"/>
</dbReference>
<dbReference type="Proteomes" id="UP000234681">
    <property type="component" value="Chromosome x"/>
</dbReference>
<dbReference type="Bgee" id="ENSRNOG00000010846">
    <property type="expression patterns" value="Expressed in pancreas and 20 other cell types or tissues"/>
</dbReference>
<dbReference type="GO" id="GO:0005813">
    <property type="term" value="C:centrosome"/>
    <property type="evidence" value="ECO:0000250"/>
    <property type="project" value="UniProtKB"/>
</dbReference>
<dbReference type="GO" id="GO:0005768">
    <property type="term" value="C:endosome"/>
    <property type="evidence" value="ECO:0007669"/>
    <property type="project" value="UniProtKB-SubCell"/>
</dbReference>
<dbReference type="GO" id="GO:0097602">
    <property type="term" value="F:cullin family protein binding"/>
    <property type="evidence" value="ECO:0000266"/>
    <property type="project" value="RGD"/>
</dbReference>
<dbReference type="GO" id="GO:0032456">
    <property type="term" value="P:endocytic recycling"/>
    <property type="evidence" value="ECO:0000250"/>
    <property type="project" value="UniProtKB"/>
</dbReference>
<dbReference type="GO" id="GO:0006893">
    <property type="term" value="P:Golgi to plasma membrane transport"/>
    <property type="evidence" value="ECO:0000266"/>
    <property type="project" value="RGD"/>
</dbReference>
<dbReference type="GO" id="GO:0006878">
    <property type="term" value="P:intracellular copper ion homeostasis"/>
    <property type="evidence" value="ECO:0000266"/>
    <property type="project" value="RGD"/>
</dbReference>
<dbReference type="GO" id="GO:0043124">
    <property type="term" value="P:negative regulation of canonical NF-kappaB signal transduction"/>
    <property type="evidence" value="ECO:0000266"/>
    <property type="project" value="RGD"/>
</dbReference>
<dbReference type="GO" id="GO:0043123">
    <property type="term" value="P:positive regulation of canonical NF-kappaB signal transduction"/>
    <property type="evidence" value="ECO:0000266"/>
    <property type="project" value="RGD"/>
</dbReference>
<dbReference type="GO" id="GO:2000060">
    <property type="term" value="P:positive regulation of ubiquitin-dependent protein catabolic process"/>
    <property type="evidence" value="ECO:0000266"/>
    <property type="project" value="RGD"/>
</dbReference>
<dbReference type="GO" id="GO:0015031">
    <property type="term" value="P:protein transport"/>
    <property type="evidence" value="ECO:0007669"/>
    <property type="project" value="UniProtKB-KW"/>
</dbReference>
<dbReference type="InterPro" id="IPR008530">
    <property type="entry name" value="CCDC22"/>
</dbReference>
<dbReference type="InterPro" id="IPR048348">
    <property type="entry name" value="CCDC22_CC"/>
</dbReference>
<dbReference type="InterPro" id="IPR048349">
    <property type="entry name" value="CCDC22_N"/>
</dbReference>
<dbReference type="PANTHER" id="PTHR15668:SF4">
    <property type="entry name" value="COILED-COIL DOMAIN-CONTAINING PROTEIN 22"/>
    <property type="match status" value="1"/>
</dbReference>
<dbReference type="PANTHER" id="PTHR15668">
    <property type="entry name" value="JM1 PROTEIN"/>
    <property type="match status" value="1"/>
</dbReference>
<dbReference type="Pfam" id="PF05667">
    <property type="entry name" value="CCDC22_CC"/>
    <property type="match status" value="1"/>
</dbReference>
<dbReference type="Pfam" id="PF21674">
    <property type="entry name" value="CCDC22_N"/>
    <property type="match status" value="1"/>
</dbReference>
<evidence type="ECO:0000250" key="1">
    <source>
        <dbReference type="UniProtKB" id="O60826"/>
    </source>
</evidence>
<evidence type="ECO:0000250" key="2">
    <source>
        <dbReference type="UniProtKB" id="Q9JIG7"/>
    </source>
</evidence>
<evidence type="ECO:0000255" key="3"/>
<evidence type="ECO:0000305" key="4"/>
<name>CCD22_RAT</name>
<gene>
    <name evidence="1" type="primary">Ccdc22</name>
</gene>
<comment type="function">
    <text evidence="1">Component of the commander complex that is essential for endosomal recycling of transmembrane cargos; the Commander complex is composed of composed of the CCC subcomplex and the retriever subcomplex (By similarity). Component of the CCC complex, which is involved in the regulation of endosomal recycling of surface proteins, including integrins, signaling receptor and channels (By similarity). Involved in regulation of NF-kappa-B signaling (By similarity). Promotes ubiquitination of I-kappa-B-kinase subunit IKBKB and its subsequent proteasomal degradation leading to NF-kappa-B activation; the function may involve association with COMMD8 and a CUL1-dependent E3 ubiquitin ligase complex (By similarity). May down-regulate NF-kappa-B activity via association with COMMD1 and involving a CUL2-dependent E3 ubiquitin ligase complex. Regulates the cellular localization of COMM domain-containing proteins, such as COMMD1 and COMMD10 (By similarity). Component of the CCC complex, which is involved in the regulation of endosomal recycling of surface proteins, including integrins, signaling receptor and channels. The CCC complex associates with SNX17, retriever and WASH complexes to prevent lysosomal degradation and promote cell surface recycling of numerous cargos such as integrins ITGA5:ITGB1 (By similarity). Plays a role in copper ion homeostasis (By similarity). Involved in copper-dependent ATP7A trafficking between the trans-Golgi network and vesicles in the cell periphery; the function is proposed to depend on its association within the CCC complex and cooperation with the WASH complex on early endosomes (By similarity).</text>
</comment>
<comment type="subunit">
    <text evidence="1 2">Component of the commander complex consisting of the CCC subcomplex and the retriever subcomplex (By similarity). Component of the CCC (COMMD/CCDC22/CCDC93) subcomplex consisting of COMMD1, COMMD2, COMMD3, COMMD4, COMMD5, COMMD6, COMMD7, COMMD8, COMMD9, COMMD10, CCDC22 and CCDC93 (By similarity). Forms a coiled-coil heterodimer with CCDC22; this heterodimer interacts with the guanine nucleotide exchange factor DENND10; the interaction is direct (By similarity). Interacts with CUL1, CUL2, CUL3, SKP1, BTRC (By similarity). Interacts with SNX17 and SNX31 (By similarity). Interacts with CPNE1 and CPNE4 (By similarity).</text>
</comment>
<comment type="subcellular location">
    <subcellularLocation>
        <location evidence="1">Endosome</location>
    </subcellularLocation>
    <subcellularLocation>
        <location evidence="1">Cytoplasm</location>
        <location evidence="1">Cytoskeleton</location>
        <location evidence="1">Microtubule organizing center</location>
        <location evidence="1">Centrosome</location>
    </subcellularLocation>
</comment>
<comment type="similarity">
    <text evidence="3">Belongs to the CCDC22 family.</text>
</comment>
<comment type="sequence caution" evidence="4">
    <conflict type="erroneous gene model prediction">
        <sequence resource="EMBL-CDS" id="EDL83846"/>
    </conflict>
</comment>
<feature type="chain" id="PRO_0000365633" description="Coiled-coil domain-containing protein 22">
    <location>
        <begin position="1"/>
        <end position="627"/>
    </location>
</feature>
<feature type="region of interest" description="Sufficicient and required for interaction with CCDC93" evidence="1">
    <location>
        <begin position="1"/>
        <end position="447"/>
    </location>
</feature>
<feature type="region of interest" description="Sufficient for interaction with COMMD1" evidence="1">
    <location>
        <begin position="1"/>
        <end position="321"/>
    </location>
</feature>
<feature type="coiled-coil region" evidence="3">
    <location>
        <begin position="321"/>
        <end position="384"/>
    </location>
</feature>
<feature type="coiled-coil region" evidence="3">
    <location>
        <begin position="448"/>
        <end position="535"/>
    </location>
</feature>
<feature type="modified residue" description="Phosphoserine" evidence="1">
    <location>
        <position position="410"/>
    </location>
</feature>
<sequence length="627" mass="70855">MEEADRILIHSLRQAGTAVPPEVQTLRAFTTELVVEAVVRCLRVINPDVGSGLSHLLPPAMSARFRLAMSLAQACMDLGYPLELGYQNFLYPSEPDLRDLLLFLAERLPTDASEDADQPAGDSAIFLRAIGSQIRDQLALPWVPPLLRTPKVQRLQGSALQQAFHSSRLVLPELNCRGEPREFQASPLLLPAPSQVPQLLGRAASLLEHHAIQLCQHVNRDCPGDEDRVRWASRLPSQEDPRAPQQRLHKQLIEHLRQSWGPLGAPTQVRDLGEMLQAWGAKAMTGVPKGSRFTHSEKFTFHLEPQVQAAQVADIPAASQRPEQDTRAAQEEELESLREQLASVNHNIEEVEANMKSLGMNLVQVETECRQSELSVAEQEQALRLKSRTVELLPDGAANLTKLQLVVESSAQRLIHLASQWEKHRVPLLAEYRHLRKLQDCRELESSRRLVEIQELHQSVRAAAEEARRKEEVYKQLVSELETLPKDVSRLAYTQRILEIVGNIRKQKEEITKILSDTKELQKEINSLSGKLDRTFAVTDELVFKDAKKDDAVRKAYKYLAALHENCSQLIQTIEDTGTIMREVRDLEEQIETEMGKKTLSNLEKICEDYRALRQENAGLLGRVREV</sequence>
<reference evidence="4" key="1">
    <citation type="submission" date="2005-07" db="EMBL/GenBank/DDBJ databases">
        <authorList>
            <person name="Mural R.J."/>
            <person name="Adams M.D."/>
            <person name="Myers E.W."/>
            <person name="Smith H.O."/>
            <person name="Venter J.C."/>
        </authorList>
    </citation>
    <scope>NUCLEOTIDE SEQUENCE [LARGE SCALE GENOMIC DNA]</scope>
</reference>
<reference evidence="4" key="2">
    <citation type="submission" date="2009-01" db="UniProtKB">
        <authorList>
            <person name="Maurya D.K."/>
            <person name="Bhargava P."/>
        </authorList>
    </citation>
    <scope>IDENTIFICATION BY MASS SPECTROMETRY</scope>
</reference>
<accession>P86182</accession>
<accession>A6KP98</accession>
<protein>
    <recommendedName>
        <fullName evidence="1">Coiled-coil domain-containing protein 22</fullName>
    </recommendedName>
</protein>
<keyword id="KW-0175">Coiled coil</keyword>
<keyword id="KW-0963">Cytoplasm</keyword>
<keyword id="KW-0206">Cytoskeleton</keyword>
<keyword id="KW-0967">Endosome</keyword>
<keyword id="KW-0597">Phosphoprotein</keyword>
<keyword id="KW-0653">Protein transport</keyword>
<keyword id="KW-1185">Reference proteome</keyword>
<keyword id="KW-0813">Transport</keyword>
<keyword id="KW-0833">Ubl conjugation pathway</keyword>
<organism>
    <name type="scientific">Rattus norvegicus</name>
    <name type="common">Rat</name>
    <dbReference type="NCBI Taxonomy" id="10116"/>
    <lineage>
        <taxon>Eukaryota</taxon>
        <taxon>Metazoa</taxon>
        <taxon>Chordata</taxon>
        <taxon>Craniata</taxon>
        <taxon>Vertebrata</taxon>
        <taxon>Euteleostomi</taxon>
        <taxon>Mammalia</taxon>
        <taxon>Eutheria</taxon>
        <taxon>Euarchontoglires</taxon>
        <taxon>Glires</taxon>
        <taxon>Rodentia</taxon>
        <taxon>Myomorpha</taxon>
        <taxon>Muroidea</taxon>
        <taxon>Muridae</taxon>
        <taxon>Murinae</taxon>
        <taxon>Rattus</taxon>
    </lineage>
</organism>